<proteinExistence type="inferred from homology"/>
<feature type="chain" id="PRO_1000117417" description="2-C-methyl-D-erythritol 2,4-cyclodiphosphate synthase">
    <location>
        <begin position="1"/>
        <end position="158"/>
    </location>
</feature>
<feature type="binding site" evidence="1">
    <location>
        <begin position="9"/>
        <end position="11"/>
    </location>
    <ligand>
        <name>4-CDP-2-C-methyl-D-erythritol 2-phosphate</name>
        <dbReference type="ChEBI" id="CHEBI:57919"/>
    </ligand>
</feature>
<feature type="binding site" evidence="1">
    <location>
        <position position="9"/>
    </location>
    <ligand>
        <name>a divalent metal cation</name>
        <dbReference type="ChEBI" id="CHEBI:60240"/>
    </ligand>
</feature>
<feature type="binding site" evidence="1">
    <location>
        <position position="11"/>
    </location>
    <ligand>
        <name>a divalent metal cation</name>
        <dbReference type="ChEBI" id="CHEBI:60240"/>
    </ligand>
</feature>
<feature type="binding site" evidence="1">
    <location>
        <begin position="35"/>
        <end position="36"/>
    </location>
    <ligand>
        <name>4-CDP-2-C-methyl-D-erythritol 2-phosphate</name>
        <dbReference type="ChEBI" id="CHEBI:57919"/>
    </ligand>
</feature>
<feature type="binding site" evidence="1">
    <location>
        <position position="43"/>
    </location>
    <ligand>
        <name>a divalent metal cation</name>
        <dbReference type="ChEBI" id="CHEBI:60240"/>
    </ligand>
</feature>
<feature type="binding site" evidence="1">
    <location>
        <begin position="57"/>
        <end position="59"/>
    </location>
    <ligand>
        <name>4-CDP-2-C-methyl-D-erythritol 2-phosphate</name>
        <dbReference type="ChEBI" id="CHEBI:57919"/>
    </ligand>
</feature>
<feature type="binding site" evidence="1">
    <location>
        <begin position="62"/>
        <end position="66"/>
    </location>
    <ligand>
        <name>4-CDP-2-C-methyl-D-erythritol 2-phosphate</name>
        <dbReference type="ChEBI" id="CHEBI:57919"/>
    </ligand>
</feature>
<feature type="binding site" evidence="1">
    <location>
        <begin position="101"/>
        <end position="107"/>
    </location>
    <ligand>
        <name>4-CDP-2-C-methyl-D-erythritol 2-phosphate</name>
        <dbReference type="ChEBI" id="CHEBI:57919"/>
    </ligand>
</feature>
<feature type="binding site" evidence="1">
    <location>
        <begin position="133"/>
        <end position="136"/>
    </location>
    <ligand>
        <name>4-CDP-2-C-methyl-D-erythritol 2-phosphate</name>
        <dbReference type="ChEBI" id="CHEBI:57919"/>
    </ligand>
</feature>
<feature type="binding site" evidence="1">
    <location>
        <position position="140"/>
    </location>
    <ligand>
        <name>4-CDP-2-C-methyl-D-erythritol 2-phosphate</name>
        <dbReference type="ChEBI" id="CHEBI:57919"/>
    </ligand>
</feature>
<feature type="binding site" evidence="1">
    <location>
        <position position="143"/>
    </location>
    <ligand>
        <name>4-CDP-2-C-methyl-D-erythritol 2-phosphate</name>
        <dbReference type="ChEBI" id="CHEBI:57919"/>
    </ligand>
</feature>
<feature type="site" description="Transition state stabilizer" evidence="1">
    <location>
        <position position="35"/>
    </location>
</feature>
<feature type="site" description="Transition state stabilizer" evidence="1">
    <location>
        <position position="134"/>
    </location>
</feature>
<protein>
    <recommendedName>
        <fullName evidence="1">2-C-methyl-D-erythritol 2,4-cyclodiphosphate synthase</fullName>
        <shortName evidence="1">MECDP-synthase</shortName>
        <shortName evidence="1">MECPP-synthase</shortName>
        <shortName evidence="1">MECPS</shortName>
        <ecNumber evidence="1">4.6.1.12</ecNumber>
    </recommendedName>
</protein>
<reference key="1">
    <citation type="submission" date="2008-10" db="EMBL/GenBank/DDBJ databases">
        <title>Genome sequence of Bacillus cereus AH820.</title>
        <authorList>
            <person name="Dodson R.J."/>
            <person name="Durkin A.S."/>
            <person name="Rosovitz M.J."/>
            <person name="Rasko D.A."/>
            <person name="Hoffmaster A."/>
            <person name="Ravel J."/>
            <person name="Sutton G."/>
        </authorList>
    </citation>
    <scope>NUCLEOTIDE SEQUENCE [LARGE SCALE GENOMIC DNA]</scope>
    <source>
        <strain>AH820</strain>
    </source>
</reference>
<comment type="function">
    <text evidence="1">Involved in the biosynthesis of isopentenyl diphosphate (IPP) and dimethylallyl diphosphate (DMAPP), two major building blocks of isoprenoid compounds. Catalyzes the conversion of 4-diphosphocytidyl-2-C-methyl-D-erythritol 2-phosphate (CDP-ME2P) to 2-C-methyl-D-erythritol 2,4-cyclodiphosphate (ME-CPP) with a corresponding release of cytidine 5-monophosphate (CMP).</text>
</comment>
<comment type="catalytic activity">
    <reaction evidence="1">
        <text>4-CDP-2-C-methyl-D-erythritol 2-phosphate = 2-C-methyl-D-erythritol 2,4-cyclic diphosphate + CMP</text>
        <dbReference type="Rhea" id="RHEA:23864"/>
        <dbReference type="ChEBI" id="CHEBI:57919"/>
        <dbReference type="ChEBI" id="CHEBI:58483"/>
        <dbReference type="ChEBI" id="CHEBI:60377"/>
        <dbReference type="EC" id="4.6.1.12"/>
    </reaction>
</comment>
<comment type="cofactor">
    <cofactor evidence="1">
        <name>a divalent metal cation</name>
        <dbReference type="ChEBI" id="CHEBI:60240"/>
    </cofactor>
    <text evidence="1">Binds 1 divalent metal cation per subunit.</text>
</comment>
<comment type="pathway">
    <text evidence="1">Isoprenoid biosynthesis; isopentenyl diphosphate biosynthesis via DXP pathway; isopentenyl diphosphate from 1-deoxy-D-xylulose 5-phosphate: step 4/6.</text>
</comment>
<comment type="subunit">
    <text evidence="1">Homotrimer.</text>
</comment>
<comment type="similarity">
    <text evidence="1">Belongs to the IspF family.</text>
</comment>
<accession>B7JK94</accession>
<dbReference type="EC" id="4.6.1.12" evidence="1"/>
<dbReference type="EMBL" id="CP001283">
    <property type="protein sequence ID" value="ACK88782.1"/>
    <property type="molecule type" value="Genomic_DNA"/>
</dbReference>
<dbReference type="RefSeq" id="WP_000488386.1">
    <property type="nucleotide sequence ID" value="NC_011773.1"/>
</dbReference>
<dbReference type="SMR" id="B7JK94"/>
<dbReference type="GeneID" id="93010967"/>
<dbReference type="KEGG" id="bcu:BCAH820_0097"/>
<dbReference type="HOGENOM" id="CLU_084630_2_0_9"/>
<dbReference type="UniPathway" id="UPA00056">
    <property type="reaction ID" value="UER00095"/>
</dbReference>
<dbReference type="Proteomes" id="UP000001363">
    <property type="component" value="Chromosome"/>
</dbReference>
<dbReference type="GO" id="GO:0008685">
    <property type="term" value="F:2-C-methyl-D-erythritol 2,4-cyclodiphosphate synthase activity"/>
    <property type="evidence" value="ECO:0007669"/>
    <property type="project" value="UniProtKB-UniRule"/>
</dbReference>
<dbReference type="GO" id="GO:0046872">
    <property type="term" value="F:metal ion binding"/>
    <property type="evidence" value="ECO:0007669"/>
    <property type="project" value="UniProtKB-KW"/>
</dbReference>
<dbReference type="GO" id="GO:0019288">
    <property type="term" value="P:isopentenyl diphosphate biosynthetic process, methylerythritol 4-phosphate pathway"/>
    <property type="evidence" value="ECO:0007669"/>
    <property type="project" value="UniProtKB-UniRule"/>
</dbReference>
<dbReference type="GO" id="GO:0016114">
    <property type="term" value="P:terpenoid biosynthetic process"/>
    <property type="evidence" value="ECO:0007669"/>
    <property type="project" value="InterPro"/>
</dbReference>
<dbReference type="CDD" id="cd00554">
    <property type="entry name" value="MECDP_synthase"/>
    <property type="match status" value="1"/>
</dbReference>
<dbReference type="FunFam" id="3.30.1330.50:FF:000001">
    <property type="entry name" value="2-C-methyl-D-erythritol 2,4-cyclodiphosphate synthase"/>
    <property type="match status" value="1"/>
</dbReference>
<dbReference type="Gene3D" id="3.30.1330.50">
    <property type="entry name" value="2-C-methyl-D-erythritol 2,4-cyclodiphosphate synthase"/>
    <property type="match status" value="1"/>
</dbReference>
<dbReference type="HAMAP" id="MF_00107">
    <property type="entry name" value="IspF"/>
    <property type="match status" value="1"/>
</dbReference>
<dbReference type="InterPro" id="IPR003526">
    <property type="entry name" value="MECDP_synthase"/>
</dbReference>
<dbReference type="InterPro" id="IPR020555">
    <property type="entry name" value="MECDP_synthase_CS"/>
</dbReference>
<dbReference type="InterPro" id="IPR036571">
    <property type="entry name" value="MECDP_synthase_sf"/>
</dbReference>
<dbReference type="NCBIfam" id="TIGR00151">
    <property type="entry name" value="ispF"/>
    <property type="match status" value="1"/>
</dbReference>
<dbReference type="PANTHER" id="PTHR43181">
    <property type="entry name" value="2-C-METHYL-D-ERYTHRITOL 2,4-CYCLODIPHOSPHATE SYNTHASE, CHLOROPLASTIC"/>
    <property type="match status" value="1"/>
</dbReference>
<dbReference type="PANTHER" id="PTHR43181:SF1">
    <property type="entry name" value="2-C-METHYL-D-ERYTHRITOL 2,4-CYCLODIPHOSPHATE SYNTHASE, CHLOROPLASTIC"/>
    <property type="match status" value="1"/>
</dbReference>
<dbReference type="Pfam" id="PF02542">
    <property type="entry name" value="YgbB"/>
    <property type="match status" value="1"/>
</dbReference>
<dbReference type="SUPFAM" id="SSF69765">
    <property type="entry name" value="IpsF-like"/>
    <property type="match status" value="1"/>
</dbReference>
<dbReference type="PROSITE" id="PS01350">
    <property type="entry name" value="ISPF"/>
    <property type="match status" value="1"/>
</dbReference>
<keyword id="KW-0414">Isoprene biosynthesis</keyword>
<keyword id="KW-0456">Lyase</keyword>
<keyword id="KW-0479">Metal-binding</keyword>
<sequence length="158" mass="17219">MFRIGQGFDVHEFAEGRPLIIGGITIPHEKGLIGHSDADVLLHTIADACLGAIAAGDIGKHFPDTDPAFKDADSAVLLQKVWEFVREQGYELGNLDCTIIAQKPKMAPHIESMRKRISELLETSIDNINVKATTTEKLGFTGREEGIASQAVVLLQKK</sequence>
<evidence type="ECO:0000255" key="1">
    <source>
        <dbReference type="HAMAP-Rule" id="MF_00107"/>
    </source>
</evidence>
<name>ISPF_BACC0</name>
<gene>
    <name evidence="1" type="primary">ispF</name>
    <name type="ordered locus">BCAH820_0097</name>
</gene>
<organism>
    <name type="scientific">Bacillus cereus (strain AH820)</name>
    <dbReference type="NCBI Taxonomy" id="405535"/>
    <lineage>
        <taxon>Bacteria</taxon>
        <taxon>Bacillati</taxon>
        <taxon>Bacillota</taxon>
        <taxon>Bacilli</taxon>
        <taxon>Bacillales</taxon>
        <taxon>Bacillaceae</taxon>
        <taxon>Bacillus</taxon>
        <taxon>Bacillus cereus group</taxon>
    </lineage>
</organism>